<organism>
    <name type="scientific">Drimys granadensis</name>
    <dbReference type="NCBI Taxonomy" id="224735"/>
    <lineage>
        <taxon>Eukaryota</taxon>
        <taxon>Viridiplantae</taxon>
        <taxon>Streptophyta</taxon>
        <taxon>Embryophyta</taxon>
        <taxon>Tracheophyta</taxon>
        <taxon>Spermatophyta</taxon>
        <taxon>Magnoliopsida</taxon>
        <taxon>Magnoliidae</taxon>
        <taxon>Canellales</taxon>
        <taxon>Winteraceae</taxon>
        <taxon>Drimys</taxon>
    </lineage>
</organism>
<accession>Q06GZ0</accession>
<keyword id="KW-0066">ATP synthesis</keyword>
<keyword id="KW-0067">ATP-binding</keyword>
<keyword id="KW-0139">CF(1)</keyword>
<keyword id="KW-0150">Chloroplast</keyword>
<keyword id="KW-0375">Hydrogen ion transport</keyword>
<keyword id="KW-0406">Ion transport</keyword>
<keyword id="KW-0472">Membrane</keyword>
<keyword id="KW-0547">Nucleotide-binding</keyword>
<keyword id="KW-0934">Plastid</keyword>
<keyword id="KW-0793">Thylakoid</keyword>
<keyword id="KW-1278">Translocase</keyword>
<keyword id="KW-0813">Transport</keyword>
<dbReference type="EC" id="7.1.2.2" evidence="1"/>
<dbReference type="EMBL" id="DQ887676">
    <property type="protein sequence ID" value="ABH88304.1"/>
    <property type="molecule type" value="Genomic_DNA"/>
</dbReference>
<dbReference type="RefSeq" id="YP_784393.1">
    <property type="nucleotide sequence ID" value="NC_008456.1"/>
</dbReference>
<dbReference type="SMR" id="Q06GZ0"/>
<dbReference type="GeneID" id="4363569"/>
<dbReference type="GO" id="GO:0009535">
    <property type="term" value="C:chloroplast thylakoid membrane"/>
    <property type="evidence" value="ECO:0007669"/>
    <property type="project" value="UniProtKB-SubCell"/>
</dbReference>
<dbReference type="GO" id="GO:0005739">
    <property type="term" value="C:mitochondrion"/>
    <property type="evidence" value="ECO:0007669"/>
    <property type="project" value="GOC"/>
</dbReference>
<dbReference type="GO" id="GO:0045259">
    <property type="term" value="C:proton-transporting ATP synthase complex"/>
    <property type="evidence" value="ECO:0007669"/>
    <property type="project" value="UniProtKB-KW"/>
</dbReference>
<dbReference type="GO" id="GO:0005524">
    <property type="term" value="F:ATP binding"/>
    <property type="evidence" value="ECO:0007669"/>
    <property type="project" value="UniProtKB-UniRule"/>
</dbReference>
<dbReference type="GO" id="GO:0016887">
    <property type="term" value="F:ATP hydrolysis activity"/>
    <property type="evidence" value="ECO:0007669"/>
    <property type="project" value="InterPro"/>
</dbReference>
<dbReference type="GO" id="GO:0046933">
    <property type="term" value="F:proton-transporting ATP synthase activity, rotational mechanism"/>
    <property type="evidence" value="ECO:0007669"/>
    <property type="project" value="UniProtKB-UniRule"/>
</dbReference>
<dbReference type="GO" id="GO:0042776">
    <property type="term" value="P:proton motive force-driven mitochondrial ATP synthesis"/>
    <property type="evidence" value="ECO:0007669"/>
    <property type="project" value="TreeGrafter"/>
</dbReference>
<dbReference type="CDD" id="cd18110">
    <property type="entry name" value="ATP-synt_F1_beta_C"/>
    <property type="match status" value="1"/>
</dbReference>
<dbReference type="CDD" id="cd18115">
    <property type="entry name" value="ATP-synt_F1_beta_N"/>
    <property type="match status" value="1"/>
</dbReference>
<dbReference type="CDD" id="cd01133">
    <property type="entry name" value="F1-ATPase_beta_CD"/>
    <property type="match status" value="1"/>
</dbReference>
<dbReference type="FunFam" id="1.10.1140.10:FF:000001">
    <property type="entry name" value="ATP synthase subunit beta"/>
    <property type="match status" value="1"/>
</dbReference>
<dbReference type="FunFam" id="3.40.50.300:FF:000004">
    <property type="entry name" value="ATP synthase subunit beta"/>
    <property type="match status" value="1"/>
</dbReference>
<dbReference type="FunFam" id="2.40.10.170:FF:000002">
    <property type="entry name" value="ATP synthase subunit beta, chloroplastic"/>
    <property type="match status" value="1"/>
</dbReference>
<dbReference type="Gene3D" id="2.40.10.170">
    <property type="match status" value="1"/>
</dbReference>
<dbReference type="Gene3D" id="1.10.1140.10">
    <property type="entry name" value="Bovine Mitochondrial F1-atpase, Atp Synthase Beta Chain, Chain D, domain 3"/>
    <property type="match status" value="1"/>
</dbReference>
<dbReference type="Gene3D" id="3.40.50.300">
    <property type="entry name" value="P-loop containing nucleotide triphosphate hydrolases"/>
    <property type="match status" value="1"/>
</dbReference>
<dbReference type="HAMAP" id="MF_01347">
    <property type="entry name" value="ATP_synth_beta_bact"/>
    <property type="match status" value="1"/>
</dbReference>
<dbReference type="InterPro" id="IPR003593">
    <property type="entry name" value="AAA+_ATPase"/>
</dbReference>
<dbReference type="InterPro" id="IPR055190">
    <property type="entry name" value="ATP-synt_VA_C"/>
</dbReference>
<dbReference type="InterPro" id="IPR005722">
    <property type="entry name" value="ATP_synth_F1_bsu"/>
</dbReference>
<dbReference type="InterPro" id="IPR020003">
    <property type="entry name" value="ATPase_a/bsu_AS"/>
</dbReference>
<dbReference type="InterPro" id="IPR050053">
    <property type="entry name" value="ATPase_alpha/beta_chains"/>
</dbReference>
<dbReference type="InterPro" id="IPR004100">
    <property type="entry name" value="ATPase_F1/V1/A1_a/bsu_N"/>
</dbReference>
<dbReference type="InterPro" id="IPR036121">
    <property type="entry name" value="ATPase_F1/V1/A1_a/bsu_N_sf"/>
</dbReference>
<dbReference type="InterPro" id="IPR000194">
    <property type="entry name" value="ATPase_F1/V1/A1_a/bsu_nucl-bd"/>
</dbReference>
<dbReference type="InterPro" id="IPR024034">
    <property type="entry name" value="ATPase_F1/V1_b/a_C"/>
</dbReference>
<dbReference type="InterPro" id="IPR027417">
    <property type="entry name" value="P-loop_NTPase"/>
</dbReference>
<dbReference type="NCBIfam" id="TIGR01039">
    <property type="entry name" value="atpD"/>
    <property type="match status" value="1"/>
</dbReference>
<dbReference type="PANTHER" id="PTHR15184">
    <property type="entry name" value="ATP SYNTHASE"/>
    <property type="match status" value="1"/>
</dbReference>
<dbReference type="PANTHER" id="PTHR15184:SF71">
    <property type="entry name" value="ATP SYNTHASE SUBUNIT BETA, MITOCHONDRIAL"/>
    <property type="match status" value="1"/>
</dbReference>
<dbReference type="Pfam" id="PF00006">
    <property type="entry name" value="ATP-synt_ab"/>
    <property type="match status" value="1"/>
</dbReference>
<dbReference type="Pfam" id="PF02874">
    <property type="entry name" value="ATP-synt_ab_N"/>
    <property type="match status" value="1"/>
</dbReference>
<dbReference type="Pfam" id="PF22919">
    <property type="entry name" value="ATP-synt_VA_C"/>
    <property type="match status" value="1"/>
</dbReference>
<dbReference type="SMART" id="SM00382">
    <property type="entry name" value="AAA"/>
    <property type="match status" value="1"/>
</dbReference>
<dbReference type="SUPFAM" id="SSF47917">
    <property type="entry name" value="C-terminal domain of alpha and beta subunits of F1 ATP synthase"/>
    <property type="match status" value="1"/>
</dbReference>
<dbReference type="SUPFAM" id="SSF50615">
    <property type="entry name" value="N-terminal domain of alpha and beta subunits of F1 ATP synthase"/>
    <property type="match status" value="1"/>
</dbReference>
<dbReference type="SUPFAM" id="SSF52540">
    <property type="entry name" value="P-loop containing nucleoside triphosphate hydrolases"/>
    <property type="match status" value="1"/>
</dbReference>
<dbReference type="PROSITE" id="PS00152">
    <property type="entry name" value="ATPASE_ALPHA_BETA"/>
    <property type="match status" value="1"/>
</dbReference>
<protein>
    <recommendedName>
        <fullName evidence="1">ATP synthase subunit beta, chloroplastic</fullName>
        <ecNumber evidence="1">7.1.2.2</ecNumber>
    </recommendedName>
    <alternativeName>
        <fullName evidence="1">ATP synthase F1 sector subunit beta</fullName>
    </alternativeName>
    <alternativeName>
        <fullName evidence="1">F-ATPase subunit beta</fullName>
    </alternativeName>
</protein>
<geneLocation type="chloroplast"/>
<sequence>MRINPTTSGPGVSTLEEKNLGRIAQIIGPVLDVVFPPGKMPNIYNALVVKGRDTVGQQINVTCEVQQLLGNNRVRAVAMSATDGLMRGMEVIDTGAPLSVPVGGATLGRIFNVLGEPVDNLGPVDTRTTSPIHRSAPAFIQLDTRLSIFETGIKVVDLLAPYRRGGKIGLFGGAGVGKTVLIMELINNIAKAHGGVSVFGGVGERTREGNDLYMEMKESGVINEENIAESKVALVHGQMNEPPGARMRVGLTALTMAEYFRDVNEQDVLLFIDNIFRFVQAGSEVSALLGRMPSAVGYQPTLSTEMGSLQERITSTKEGSITSIQAVYVPADDLTDPAPATTFAHLDATTVLSRGLAAKGIYPAVDPLDSTSTMLQPRIVGEEHYETAQRVKQTSQRYKELQDIIAILGSDELSEEDRLTVARARKIERFLSQPFFVAEVFTGSPGKYVGLAETIRGFQLILSGELDGLPEQAFYLVGNIDEATAKAMNLDVESKLKK</sequence>
<name>ATPB_DRIGR</name>
<comment type="function">
    <text evidence="1">Produces ATP from ADP in the presence of a proton gradient across the membrane. The catalytic sites are hosted primarily by the beta subunits.</text>
</comment>
<comment type="catalytic activity">
    <reaction evidence="1">
        <text>ATP + H2O + 4 H(+)(in) = ADP + phosphate + 5 H(+)(out)</text>
        <dbReference type="Rhea" id="RHEA:57720"/>
        <dbReference type="ChEBI" id="CHEBI:15377"/>
        <dbReference type="ChEBI" id="CHEBI:15378"/>
        <dbReference type="ChEBI" id="CHEBI:30616"/>
        <dbReference type="ChEBI" id="CHEBI:43474"/>
        <dbReference type="ChEBI" id="CHEBI:456216"/>
        <dbReference type="EC" id="7.1.2.2"/>
    </reaction>
</comment>
<comment type="subunit">
    <text evidence="1">F-type ATPases have 2 components, CF(1) - the catalytic core - and CF(0) - the membrane proton channel. CF(1) has five subunits: alpha(3), beta(3), gamma(1), delta(1), epsilon(1). CF(0) has four main subunits: a(1), b(1), b'(1) and c(9-12).</text>
</comment>
<comment type="subcellular location">
    <subcellularLocation>
        <location evidence="1">Plastid</location>
        <location evidence="1">Chloroplast thylakoid membrane</location>
        <topology evidence="1">Peripheral membrane protein</topology>
    </subcellularLocation>
</comment>
<comment type="similarity">
    <text evidence="1">Belongs to the ATPase alpha/beta chains family.</text>
</comment>
<reference key="1">
    <citation type="journal article" date="2006" name="BMC Evol. Biol.">
        <title>Complete plastid genome sequences of Drimys, Liriodendron, and Piper: implications for the phylogenetic relationships of magnoliids.</title>
        <authorList>
            <person name="Cai Z."/>
            <person name="Penaflor C."/>
            <person name="Kuehl J.V."/>
            <person name="Leebens-Mack J."/>
            <person name="Carlson J.E."/>
            <person name="dePamphilis C.W."/>
            <person name="Boore J.L."/>
            <person name="Jansen R.K."/>
        </authorList>
    </citation>
    <scope>NUCLEOTIDE SEQUENCE [LARGE SCALE GENOMIC DNA]</scope>
</reference>
<feature type="chain" id="PRO_0000275181" description="ATP synthase subunit beta, chloroplastic">
    <location>
        <begin position="1"/>
        <end position="498"/>
    </location>
</feature>
<feature type="binding site" evidence="1">
    <location>
        <begin position="172"/>
        <end position="179"/>
    </location>
    <ligand>
        <name>ATP</name>
        <dbReference type="ChEBI" id="CHEBI:30616"/>
    </ligand>
</feature>
<proteinExistence type="inferred from homology"/>
<gene>
    <name evidence="1" type="primary">atpB</name>
</gene>
<evidence type="ECO:0000255" key="1">
    <source>
        <dbReference type="HAMAP-Rule" id="MF_01347"/>
    </source>
</evidence>